<accession>Q66638</accession>
<keyword id="KW-1185">Reference proteome</keyword>
<name>UL95_EHV2</name>
<comment type="similarity">
    <text evidence="2">Belongs to the herpesviridae UL95 family.</text>
</comment>
<gene>
    <name type="primary">34</name>
</gene>
<dbReference type="EMBL" id="U20824">
    <property type="protein sequence ID" value="AAC13822.1"/>
    <property type="molecule type" value="Genomic_DNA"/>
</dbReference>
<dbReference type="PIR" id="S55629">
    <property type="entry name" value="S55629"/>
</dbReference>
<dbReference type="KEGG" id="vg:1461047"/>
<dbReference type="Proteomes" id="UP000007083">
    <property type="component" value="Segment"/>
</dbReference>
<dbReference type="InterPro" id="IPR004280">
    <property type="entry name" value="Herpes_UL95"/>
</dbReference>
<dbReference type="Pfam" id="PF03038">
    <property type="entry name" value="Herpes_UL95"/>
    <property type="match status" value="1"/>
</dbReference>
<organismHost>
    <name type="scientific">Equus caballus</name>
    <name type="common">Horse</name>
    <dbReference type="NCBI Taxonomy" id="9796"/>
</organismHost>
<proteinExistence type="inferred from homology"/>
<sequence length="347" mass="38555">MFALASMTTSGDEALNARYKESVSLSVGLCESLPEQFKLIETPINSFLLVANVMPNDDRPWDSHPASGADFHNIRMPRLERLRALIRCDRGYNNGKGGEAGQRAGEDDERMDEGVPEEGAPRSPHPPPFAHYEVYDSWSWQRALRVDKDDVIREAVAELAKPANWQGTAVEDPLPLMWLLFYGRRSFCDDPECLYRARFGHPGPLLLPNYMYRPAEDASSFLAGLCRCVRSVYGCEFGGGSHVNPAQVPFDHGRFSEALRKLGAVDDAGAYVSRQCLVCRLYRQNLMSRGIIGGRGSSIVLGGSGKKYLTREVGTRRCLELGDIALYPSYDISLILDDLEASDGLRQ</sequence>
<reference key="1">
    <citation type="journal article" date="1995" name="J. Mol. Biol.">
        <title>The DNA sequence of equine herpesvirus 2.</title>
        <authorList>
            <person name="Telford E.A.R."/>
            <person name="Watson M.S."/>
            <person name="Aird H.C."/>
            <person name="Perry J."/>
            <person name="Davison A.J."/>
        </authorList>
    </citation>
    <scope>NUCLEOTIDE SEQUENCE [LARGE SCALE GENOMIC DNA]</scope>
</reference>
<organism>
    <name type="scientific">Equine herpesvirus 2 (strain 86/87)</name>
    <name type="common">EHV-2</name>
    <dbReference type="NCBI Taxonomy" id="82831"/>
    <lineage>
        <taxon>Viruses</taxon>
        <taxon>Duplodnaviria</taxon>
        <taxon>Heunggongvirae</taxon>
        <taxon>Peploviricota</taxon>
        <taxon>Herviviricetes</taxon>
        <taxon>Herpesvirales</taxon>
        <taxon>Orthoherpesviridae</taxon>
        <taxon>Gammaherpesvirinae</taxon>
        <taxon>Percavirus</taxon>
        <taxon>Percavirus equidgamma2</taxon>
        <taxon>Equid gammaherpesvirus 2</taxon>
    </lineage>
</organism>
<protein>
    <recommendedName>
        <fullName>Gene 34 protein</fullName>
    </recommendedName>
</protein>
<evidence type="ECO:0000256" key="1">
    <source>
        <dbReference type="SAM" id="MobiDB-lite"/>
    </source>
</evidence>
<evidence type="ECO:0000305" key="2"/>
<feature type="chain" id="PRO_0000406071" description="Gene 34 protein">
    <location>
        <begin position="1"/>
        <end position="347"/>
    </location>
</feature>
<feature type="region of interest" description="Disordered" evidence="1">
    <location>
        <begin position="95"/>
        <end position="126"/>
    </location>
</feature>
<feature type="compositionally biased region" description="Acidic residues" evidence="1">
    <location>
        <begin position="106"/>
        <end position="116"/>
    </location>
</feature>